<protein>
    <recommendedName>
        <fullName evidence="1">Phosphoglucosamine mutase</fullName>
        <ecNumber evidence="1">5.4.2.10</ecNumber>
    </recommendedName>
</protein>
<comment type="function">
    <text evidence="1">Catalyzes the conversion of glucosamine-6-phosphate to glucosamine-1-phosphate.</text>
</comment>
<comment type="catalytic activity">
    <reaction evidence="1">
        <text>alpha-D-glucosamine 1-phosphate = D-glucosamine 6-phosphate</text>
        <dbReference type="Rhea" id="RHEA:23424"/>
        <dbReference type="ChEBI" id="CHEBI:58516"/>
        <dbReference type="ChEBI" id="CHEBI:58725"/>
        <dbReference type="EC" id="5.4.2.10"/>
    </reaction>
</comment>
<comment type="cofactor">
    <cofactor evidence="1">
        <name>Mg(2+)</name>
        <dbReference type="ChEBI" id="CHEBI:18420"/>
    </cofactor>
    <text evidence="1">Binds 1 Mg(2+) ion per subunit.</text>
</comment>
<comment type="PTM">
    <text evidence="1">Activated by phosphorylation.</text>
</comment>
<comment type="similarity">
    <text evidence="1">Belongs to the phosphohexose mutase family.</text>
</comment>
<accession>A0JZ25</accession>
<gene>
    <name evidence="1" type="primary">glmM</name>
    <name type="ordered locus">Arth_2916</name>
</gene>
<name>GLMM_ARTS2</name>
<organism>
    <name type="scientific">Arthrobacter sp. (strain FB24)</name>
    <dbReference type="NCBI Taxonomy" id="290399"/>
    <lineage>
        <taxon>Bacteria</taxon>
        <taxon>Bacillati</taxon>
        <taxon>Actinomycetota</taxon>
        <taxon>Actinomycetes</taxon>
        <taxon>Micrococcales</taxon>
        <taxon>Micrococcaceae</taxon>
        <taxon>Arthrobacter</taxon>
    </lineage>
</organism>
<sequence length="452" mass="46803">MSRLFGTDGVRGLANGLLTAELAMQLAQAAAVVLGHERSTNGARPRAVVARDPRASGEFISAAVSAGLSSSGIDVYDAGVLPTPAAAYLVADLHADFGVMISASHNPAPDNGIKFFAKGGQKLPDEVEDAIEAQMAKDPVRPTGSDVGRIQTFSDAEDRYIVHLLGTLPHRLDGLKVVLDCAHGAASGCSPQLFNDAGAEIVVIGAEPDGLNINDGVGSTHLGALQRAVVEHGADLGIAHDGDADRCLAIDHEGNEVDGDQIMAILALALKESGKLKDNVLVATVMSNLGLKIALRNAGISIRETAVGDRYVLEEMRDGGYNLGGEQSGHVIFADHATTGDGLLTGLQLAAQVALTGKSLKELATVMTKLPQLMINVKKVDKARAGTDEGVLAAVAEASAELGETGRVLLRPSGTEALVRVMVEAADMPTAERICKHLAAVVEERLAVAPAV</sequence>
<keyword id="KW-0413">Isomerase</keyword>
<keyword id="KW-0460">Magnesium</keyword>
<keyword id="KW-0479">Metal-binding</keyword>
<keyword id="KW-0597">Phosphoprotein</keyword>
<keyword id="KW-1185">Reference proteome</keyword>
<reference key="1">
    <citation type="journal article" date="2013" name="Stand. Genomic Sci.">
        <title>Complete genome sequence of Arthrobacter sp. strain FB24.</title>
        <authorList>
            <person name="Nakatsu C.H."/>
            <person name="Barabote R."/>
            <person name="Thompson S."/>
            <person name="Bruce D."/>
            <person name="Detter C."/>
            <person name="Brettin T."/>
            <person name="Han C."/>
            <person name="Beasley F."/>
            <person name="Chen W."/>
            <person name="Konopka A."/>
            <person name="Xie G."/>
        </authorList>
    </citation>
    <scope>NUCLEOTIDE SEQUENCE [LARGE SCALE GENOMIC DNA]</scope>
    <source>
        <strain>FB24</strain>
    </source>
</reference>
<evidence type="ECO:0000255" key="1">
    <source>
        <dbReference type="HAMAP-Rule" id="MF_01554"/>
    </source>
</evidence>
<dbReference type="EC" id="5.4.2.10" evidence="1"/>
<dbReference type="EMBL" id="CP000454">
    <property type="protein sequence ID" value="ABK04295.1"/>
    <property type="molecule type" value="Genomic_DNA"/>
</dbReference>
<dbReference type="RefSeq" id="WP_011692754.1">
    <property type="nucleotide sequence ID" value="NC_008541.1"/>
</dbReference>
<dbReference type="SMR" id="A0JZ25"/>
<dbReference type="STRING" id="290399.Arth_2916"/>
<dbReference type="KEGG" id="art:Arth_2916"/>
<dbReference type="eggNOG" id="COG1109">
    <property type="taxonomic scope" value="Bacteria"/>
</dbReference>
<dbReference type="HOGENOM" id="CLU_016950_7_0_11"/>
<dbReference type="OrthoDB" id="9803322at2"/>
<dbReference type="Proteomes" id="UP000000754">
    <property type="component" value="Chromosome"/>
</dbReference>
<dbReference type="GO" id="GO:0005829">
    <property type="term" value="C:cytosol"/>
    <property type="evidence" value="ECO:0007669"/>
    <property type="project" value="TreeGrafter"/>
</dbReference>
<dbReference type="GO" id="GO:0000287">
    <property type="term" value="F:magnesium ion binding"/>
    <property type="evidence" value="ECO:0007669"/>
    <property type="project" value="UniProtKB-UniRule"/>
</dbReference>
<dbReference type="GO" id="GO:0008966">
    <property type="term" value="F:phosphoglucosamine mutase activity"/>
    <property type="evidence" value="ECO:0007669"/>
    <property type="project" value="UniProtKB-UniRule"/>
</dbReference>
<dbReference type="GO" id="GO:0004615">
    <property type="term" value="F:phosphomannomutase activity"/>
    <property type="evidence" value="ECO:0007669"/>
    <property type="project" value="TreeGrafter"/>
</dbReference>
<dbReference type="GO" id="GO:0005975">
    <property type="term" value="P:carbohydrate metabolic process"/>
    <property type="evidence" value="ECO:0007669"/>
    <property type="project" value="InterPro"/>
</dbReference>
<dbReference type="GO" id="GO:0009252">
    <property type="term" value="P:peptidoglycan biosynthetic process"/>
    <property type="evidence" value="ECO:0007669"/>
    <property type="project" value="TreeGrafter"/>
</dbReference>
<dbReference type="GO" id="GO:0006048">
    <property type="term" value="P:UDP-N-acetylglucosamine biosynthetic process"/>
    <property type="evidence" value="ECO:0007669"/>
    <property type="project" value="TreeGrafter"/>
</dbReference>
<dbReference type="CDD" id="cd05802">
    <property type="entry name" value="GlmM"/>
    <property type="match status" value="1"/>
</dbReference>
<dbReference type="FunFam" id="3.30.310.50:FF:000001">
    <property type="entry name" value="Phosphoglucosamine mutase"/>
    <property type="match status" value="1"/>
</dbReference>
<dbReference type="FunFam" id="3.40.120.10:FF:000001">
    <property type="entry name" value="Phosphoglucosamine mutase"/>
    <property type="match status" value="1"/>
</dbReference>
<dbReference type="FunFam" id="3.40.120.10:FF:000002">
    <property type="entry name" value="Phosphoglucosamine mutase"/>
    <property type="match status" value="1"/>
</dbReference>
<dbReference type="Gene3D" id="3.40.120.10">
    <property type="entry name" value="Alpha-D-Glucose-1,6-Bisphosphate, subunit A, domain 3"/>
    <property type="match status" value="3"/>
</dbReference>
<dbReference type="Gene3D" id="3.30.310.50">
    <property type="entry name" value="Alpha-D-phosphohexomutase, C-terminal domain"/>
    <property type="match status" value="1"/>
</dbReference>
<dbReference type="HAMAP" id="MF_01554_B">
    <property type="entry name" value="GlmM_B"/>
    <property type="match status" value="1"/>
</dbReference>
<dbReference type="InterPro" id="IPR005844">
    <property type="entry name" value="A-D-PHexomutase_a/b/a-I"/>
</dbReference>
<dbReference type="InterPro" id="IPR016055">
    <property type="entry name" value="A-D-PHexomutase_a/b/a-I/II/III"/>
</dbReference>
<dbReference type="InterPro" id="IPR005845">
    <property type="entry name" value="A-D-PHexomutase_a/b/a-II"/>
</dbReference>
<dbReference type="InterPro" id="IPR005846">
    <property type="entry name" value="A-D-PHexomutase_a/b/a-III"/>
</dbReference>
<dbReference type="InterPro" id="IPR005843">
    <property type="entry name" value="A-D-PHexomutase_C"/>
</dbReference>
<dbReference type="InterPro" id="IPR036900">
    <property type="entry name" value="A-D-PHexomutase_C_sf"/>
</dbReference>
<dbReference type="InterPro" id="IPR016066">
    <property type="entry name" value="A-D-PHexomutase_CS"/>
</dbReference>
<dbReference type="InterPro" id="IPR005841">
    <property type="entry name" value="Alpha-D-phosphohexomutase_SF"/>
</dbReference>
<dbReference type="InterPro" id="IPR006352">
    <property type="entry name" value="GlmM_bact"/>
</dbReference>
<dbReference type="InterPro" id="IPR050060">
    <property type="entry name" value="Phosphoglucosamine_mutase"/>
</dbReference>
<dbReference type="NCBIfam" id="TIGR01455">
    <property type="entry name" value="glmM"/>
    <property type="match status" value="1"/>
</dbReference>
<dbReference type="PANTHER" id="PTHR42946:SF1">
    <property type="entry name" value="PHOSPHOGLUCOMUTASE (ALPHA-D-GLUCOSE-1,6-BISPHOSPHATE-DEPENDENT)"/>
    <property type="match status" value="1"/>
</dbReference>
<dbReference type="PANTHER" id="PTHR42946">
    <property type="entry name" value="PHOSPHOHEXOSE MUTASE"/>
    <property type="match status" value="1"/>
</dbReference>
<dbReference type="Pfam" id="PF02878">
    <property type="entry name" value="PGM_PMM_I"/>
    <property type="match status" value="1"/>
</dbReference>
<dbReference type="Pfam" id="PF02879">
    <property type="entry name" value="PGM_PMM_II"/>
    <property type="match status" value="1"/>
</dbReference>
<dbReference type="Pfam" id="PF02880">
    <property type="entry name" value="PGM_PMM_III"/>
    <property type="match status" value="1"/>
</dbReference>
<dbReference type="Pfam" id="PF00408">
    <property type="entry name" value="PGM_PMM_IV"/>
    <property type="match status" value="1"/>
</dbReference>
<dbReference type="PRINTS" id="PR00509">
    <property type="entry name" value="PGMPMM"/>
</dbReference>
<dbReference type="SUPFAM" id="SSF55957">
    <property type="entry name" value="Phosphoglucomutase, C-terminal domain"/>
    <property type="match status" value="1"/>
</dbReference>
<dbReference type="SUPFAM" id="SSF53738">
    <property type="entry name" value="Phosphoglucomutase, first 3 domains"/>
    <property type="match status" value="3"/>
</dbReference>
<dbReference type="PROSITE" id="PS00710">
    <property type="entry name" value="PGM_PMM"/>
    <property type="match status" value="1"/>
</dbReference>
<proteinExistence type="inferred from homology"/>
<feature type="chain" id="PRO_0000301277" description="Phosphoglucosamine mutase">
    <location>
        <begin position="1"/>
        <end position="452"/>
    </location>
</feature>
<feature type="active site" description="Phosphoserine intermediate" evidence="1">
    <location>
        <position position="104"/>
    </location>
</feature>
<feature type="binding site" description="via phosphate group" evidence="1">
    <location>
        <position position="104"/>
    </location>
    <ligand>
        <name>Mg(2+)</name>
        <dbReference type="ChEBI" id="CHEBI:18420"/>
    </ligand>
</feature>
<feature type="binding site" evidence="1">
    <location>
        <position position="241"/>
    </location>
    <ligand>
        <name>Mg(2+)</name>
        <dbReference type="ChEBI" id="CHEBI:18420"/>
    </ligand>
</feature>
<feature type="binding site" evidence="1">
    <location>
        <position position="243"/>
    </location>
    <ligand>
        <name>Mg(2+)</name>
        <dbReference type="ChEBI" id="CHEBI:18420"/>
    </ligand>
</feature>
<feature type="binding site" evidence="1">
    <location>
        <position position="245"/>
    </location>
    <ligand>
        <name>Mg(2+)</name>
        <dbReference type="ChEBI" id="CHEBI:18420"/>
    </ligand>
</feature>
<feature type="modified residue" description="Phosphoserine" evidence="1">
    <location>
        <position position="104"/>
    </location>
</feature>